<sequence length="345" mass="38174">MSTEIQKIEDNNLKESQMWNSKELKEAIKEIEKMFGKGSIMVLGQSDNLNVETFSSGSLLLDNALGIGGYPKGRIIEIYGPESSGKTTLSLHAICEIQKLGGIAAFIDAEHSLDPKYCHNLGIDTNKLLVSQPDNGEQALDILEMLINSNSIDLIIVDSVAALVPKTELEGEMSDQSIGLQARMMSKALRKLNGLIAKSNTTVIFINQLREKIGVIFGNPETTTGGKALKFFSSIRLEVRKSENILSNSEIIGNKIKIKIVKNKTAIPFKTATISLLYNKGIDKIGELVDLLVSYEIVEKSGVWYSYQNEKIGQGKTSVIQWLNADEKRTNELIQQVKKIIEQKE</sequence>
<protein>
    <recommendedName>
        <fullName evidence="1">Protein RecA</fullName>
    </recommendedName>
    <alternativeName>
        <fullName evidence="1">Recombinase A</fullName>
    </alternativeName>
</protein>
<proteinExistence type="inferred from homology"/>
<keyword id="KW-0067">ATP-binding</keyword>
<keyword id="KW-0963">Cytoplasm</keyword>
<keyword id="KW-0227">DNA damage</keyword>
<keyword id="KW-0233">DNA recombination</keyword>
<keyword id="KW-0234">DNA repair</keyword>
<keyword id="KW-0238">DNA-binding</keyword>
<keyword id="KW-0547">Nucleotide-binding</keyword>
<keyword id="KW-1185">Reference proteome</keyword>
<keyword id="KW-0742">SOS response</keyword>
<name>RECA_MYCMS</name>
<comment type="function">
    <text evidence="1">Can catalyze the hydrolysis of ATP in the presence of single-stranded DNA, the ATP-dependent uptake of single-stranded DNA by duplex DNA, and the ATP-dependent hybridization of homologous single-stranded DNAs. It interacts with LexA causing its activation and leading to its autocatalytic cleavage.</text>
</comment>
<comment type="subcellular location">
    <subcellularLocation>
        <location evidence="1">Cytoplasm</location>
    </subcellularLocation>
</comment>
<comment type="similarity">
    <text evidence="1">Belongs to the RecA family.</text>
</comment>
<dbReference type="EMBL" id="BX293980">
    <property type="protein sequence ID" value="CAE77049.1"/>
    <property type="molecule type" value="Genomic_DNA"/>
</dbReference>
<dbReference type="RefSeq" id="NP_975407.1">
    <property type="nucleotide sequence ID" value="NC_005364.2"/>
</dbReference>
<dbReference type="RefSeq" id="WP_011166605.1">
    <property type="nucleotide sequence ID" value="NC_005364.2"/>
</dbReference>
<dbReference type="SMR" id="P62218"/>
<dbReference type="STRING" id="272632.MSC_0421"/>
<dbReference type="KEGG" id="mmy:MSC_0421"/>
<dbReference type="PATRIC" id="fig|272632.4.peg.459"/>
<dbReference type="eggNOG" id="COG0468">
    <property type="taxonomic scope" value="Bacteria"/>
</dbReference>
<dbReference type="HOGENOM" id="CLU_040469_3_2_14"/>
<dbReference type="Proteomes" id="UP000001016">
    <property type="component" value="Chromosome"/>
</dbReference>
<dbReference type="GO" id="GO:0005829">
    <property type="term" value="C:cytosol"/>
    <property type="evidence" value="ECO:0007669"/>
    <property type="project" value="TreeGrafter"/>
</dbReference>
<dbReference type="GO" id="GO:0005524">
    <property type="term" value="F:ATP binding"/>
    <property type="evidence" value="ECO:0007669"/>
    <property type="project" value="UniProtKB-UniRule"/>
</dbReference>
<dbReference type="GO" id="GO:0016887">
    <property type="term" value="F:ATP hydrolysis activity"/>
    <property type="evidence" value="ECO:0007669"/>
    <property type="project" value="InterPro"/>
</dbReference>
<dbReference type="GO" id="GO:0140664">
    <property type="term" value="F:ATP-dependent DNA damage sensor activity"/>
    <property type="evidence" value="ECO:0007669"/>
    <property type="project" value="InterPro"/>
</dbReference>
<dbReference type="GO" id="GO:0003684">
    <property type="term" value="F:damaged DNA binding"/>
    <property type="evidence" value="ECO:0007669"/>
    <property type="project" value="UniProtKB-UniRule"/>
</dbReference>
<dbReference type="GO" id="GO:0003697">
    <property type="term" value="F:single-stranded DNA binding"/>
    <property type="evidence" value="ECO:0007669"/>
    <property type="project" value="UniProtKB-UniRule"/>
</dbReference>
<dbReference type="GO" id="GO:0006310">
    <property type="term" value="P:DNA recombination"/>
    <property type="evidence" value="ECO:0007669"/>
    <property type="project" value="UniProtKB-UniRule"/>
</dbReference>
<dbReference type="GO" id="GO:0006281">
    <property type="term" value="P:DNA repair"/>
    <property type="evidence" value="ECO:0007669"/>
    <property type="project" value="UniProtKB-UniRule"/>
</dbReference>
<dbReference type="GO" id="GO:0009432">
    <property type="term" value="P:SOS response"/>
    <property type="evidence" value="ECO:0007669"/>
    <property type="project" value="UniProtKB-UniRule"/>
</dbReference>
<dbReference type="CDD" id="cd00983">
    <property type="entry name" value="RecA"/>
    <property type="match status" value="1"/>
</dbReference>
<dbReference type="FunFam" id="3.40.50.300:FF:000087">
    <property type="entry name" value="Recombinase RecA"/>
    <property type="match status" value="1"/>
</dbReference>
<dbReference type="Gene3D" id="3.40.50.300">
    <property type="entry name" value="P-loop containing nucleotide triphosphate hydrolases"/>
    <property type="match status" value="1"/>
</dbReference>
<dbReference type="HAMAP" id="MF_00268">
    <property type="entry name" value="RecA"/>
    <property type="match status" value="1"/>
</dbReference>
<dbReference type="InterPro" id="IPR003593">
    <property type="entry name" value="AAA+_ATPase"/>
</dbReference>
<dbReference type="InterPro" id="IPR013765">
    <property type="entry name" value="DNA_recomb/repair_RecA"/>
</dbReference>
<dbReference type="InterPro" id="IPR020584">
    <property type="entry name" value="DNA_recomb/repair_RecA_CS"/>
</dbReference>
<dbReference type="InterPro" id="IPR027417">
    <property type="entry name" value="P-loop_NTPase"/>
</dbReference>
<dbReference type="InterPro" id="IPR049261">
    <property type="entry name" value="RecA-like_C"/>
</dbReference>
<dbReference type="InterPro" id="IPR049428">
    <property type="entry name" value="RecA-like_N"/>
</dbReference>
<dbReference type="InterPro" id="IPR020588">
    <property type="entry name" value="RecA_ATP-bd"/>
</dbReference>
<dbReference type="InterPro" id="IPR023400">
    <property type="entry name" value="RecA_C_sf"/>
</dbReference>
<dbReference type="InterPro" id="IPR020587">
    <property type="entry name" value="RecA_monomer-monomer_interface"/>
</dbReference>
<dbReference type="NCBIfam" id="TIGR02012">
    <property type="entry name" value="tigrfam_recA"/>
    <property type="match status" value="1"/>
</dbReference>
<dbReference type="PANTHER" id="PTHR45900:SF1">
    <property type="entry name" value="MITOCHONDRIAL DNA REPAIR PROTEIN RECA HOMOLOG-RELATED"/>
    <property type="match status" value="1"/>
</dbReference>
<dbReference type="PANTHER" id="PTHR45900">
    <property type="entry name" value="RECA"/>
    <property type="match status" value="1"/>
</dbReference>
<dbReference type="Pfam" id="PF00154">
    <property type="entry name" value="RecA"/>
    <property type="match status" value="1"/>
</dbReference>
<dbReference type="Pfam" id="PF21096">
    <property type="entry name" value="RecA_C"/>
    <property type="match status" value="1"/>
</dbReference>
<dbReference type="PRINTS" id="PR00142">
    <property type="entry name" value="RECA"/>
</dbReference>
<dbReference type="SMART" id="SM00382">
    <property type="entry name" value="AAA"/>
    <property type="match status" value="1"/>
</dbReference>
<dbReference type="SUPFAM" id="SSF52540">
    <property type="entry name" value="P-loop containing nucleoside triphosphate hydrolases"/>
    <property type="match status" value="1"/>
</dbReference>
<dbReference type="SUPFAM" id="SSF54752">
    <property type="entry name" value="RecA protein, C-terminal domain"/>
    <property type="match status" value="1"/>
</dbReference>
<dbReference type="PROSITE" id="PS00321">
    <property type="entry name" value="RECA_1"/>
    <property type="match status" value="1"/>
</dbReference>
<dbReference type="PROSITE" id="PS50162">
    <property type="entry name" value="RECA_2"/>
    <property type="match status" value="1"/>
</dbReference>
<dbReference type="PROSITE" id="PS50163">
    <property type="entry name" value="RECA_3"/>
    <property type="match status" value="1"/>
</dbReference>
<organism>
    <name type="scientific">Mycoplasma mycoides subsp. mycoides SC (strain CCUG 32753 / NCTC 10114 / PG1)</name>
    <dbReference type="NCBI Taxonomy" id="272632"/>
    <lineage>
        <taxon>Bacteria</taxon>
        <taxon>Bacillati</taxon>
        <taxon>Mycoplasmatota</taxon>
        <taxon>Mollicutes</taxon>
        <taxon>Mycoplasmataceae</taxon>
        <taxon>Mycoplasma</taxon>
    </lineage>
</organism>
<accession>P62218</accession>
<evidence type="ECO:0000255" key="1">
    <source>
        <dbReference type="HAMAP-Rule" id="MF_00268"/>
    </source>
</evidence>
<gene>
    <name evidence="1" type="primary">recA</name>
    <name type="ordered locus">MSC_0421</name>
</gene>
<reference key="1">
    <citation type="journal article" date="2004" name="Genome Res.">
        <title>The genome sequence of Mycoplasma mycoides subsp. mycoides SC type strain PG1T, the causative agent of contagious bovine pleuropneumonia (CBPP).</title>
        <authorList>
            <person name="Westberg J."/>
            <person name="Persson A."/>
            <person name="Holmberg A."/>
            <person name="Goesmann A."/>
            <person name="Lundeberg J."/>
            <person name="Johansson K.-E."/>
            <person name="Pettersson B."/>
            <person name="Uhlen M."/>
        </authorList>
    </citation>
    <scope>NUCLEOTIDE SEQUENCE [LARGE SCALE GENOMIC DNA]</scope>
    <source>
        <strain>CCUG 32753 / NCTC 10114 / PG1</strain>
    </source>
</reference>
<feature type="chain" id="PRO_0000122761" description="Protein RecA">
    <location>
        <begin position="1"/>
        <end position="345"/>
    </location>
</feature>
<feature type="binding site" evidence="1">
    <location>
        <begin position="80"/>
        <end position="87"/>
    </location>
    <ligand>
        <name>ATP</name>
        <dbReference type="ChEBI" id="CHEBI:30616"/>
    </ligand>
</feature>